<sequence>MSALRPPARGGLGLSRLGVRLAGSRRFQLIAERVPFLRRIGRREGEELFDIVAGFVHSQVLYALVELRVLHLVAEGPQTVQALAAATGLAPERMQLLLQGGAALKLLTRRRDGQFDLAVRGAAFLAVPGLEAMVGHHHVLYRDLADPVAFLKGETEPELARFWPYVFGAGGATDPEVTAKYSRLMTESQGLVAEDALRLVDLMGVRRLMDVGGGTGAFLAAVGRAYPLMELMLFDLPVVAEAAPQRLTEAGLAGRFTVHGGSFRDDPLPLGADAISLVRVLFDHSDETVKLLLHRVREALPAGGRVIVAEAMSGGARPHRETDTYMAFYTAAMRTGRVRSAAEIAELLTGQGFSEIKIFPGLRPYVASAVTAVRPSDAP</sequence>
<dbReference type="EC" id="2.1.1.210"/>
<dbReference type="EMBL" id="AJ010302">
    <property type="protein sequence ID" value="CAB38745.1"/>
    <property type="molecule type" value="Genomic_DNA"/>
</dbReference>
<dbReference type="EMBL" id="AF195122">
    <property type="protein sequence ID" value="AAF24295.1"/>
    <property type="molecule type" value="Genomic_DNA"/>
</dbReference>
<dbReference type="EMBL" id="CP000143">
    <property type="protein sequence ID" value="ABA79438.1"/>
    <property type="molecule type" value="Genomic_DNA"/>
</dbReference>
<dbReference type="PIR" id="T50751">
    <property type="entry name" value="T50751"/>
</dbReference>
<dbReference type="RefSeq" id="WP_011338111.1">
    <property type="nucleotide sequence ID" value="NC_007493.2"/>
</dbReference>
<dbReference type="RefSeq" id="YP_353339.1">
    <property type="nucleotide sequence ID" value="NC_007493.2"/>
</dbReference>
<dbReference type="SMR" id="P54906"/>
<dbReference type="STRING" id="272943.RSP_0264"/>
<dbReference type="EnsemblBacteria" id="ABA79438">
    <property type="protein sequence ID" value="ABA79438"/>
    <property type="gene ID" value="RSP_0264"/>
</dbReference>
<dbReference type="GeneID" id="3719274"/>
<dbReference type="KEGG" id="rsp:RSP_0264"/>
<dbReference type="PATRIC" id="fig|272943.9.peg.2208"/>
<dbReference type="eggNOG" id="COG0500">
    <property type="taxonomic scope" value="Bacteria"/>
</dbReference>
<dbReference type="OrthoDB" id="7418600at2"/>
<dbReference type="PhylomeDB" id="P54906"/>
<dbReference type="UniPathway" id="UPA00683"/>
<dbReference type="Proteomes" id="UP000002703">
    <property type="component" value="Chromosome 1"/>
</dbReference>
<dbReference type="GO" id="GO:0043803">
    <property type="term" value="F:hydroxyneurosporene-O-methyltransferase activity"/>
    <property type="evidence" value="ECO:0007669"/>
    <property type="project" value="UniProtKB-EC"/>
</dbReference>
<dbReference type="GO" id="GO:0008171">
    <property type="term" value="F:O-methyltransferase activity"/>
    <property type="evidence" value="ECO:0007669"/>
    <property type="project" value="InterPro"/>
</dbReference>
<dbReference type="GO" id="GO:0046983">
    <property type="term" value="F:protein dimerization activity"/>
    <property type="evidence" value="ECO:0007669"/>
    <property type="project" value="InterPro"/>
</dbReference>
<dbReference type="GO" id="GO:0016117">
    <property type="term" value="P:carotenoid biosynthetic process"/>
    <property type="evidence" value="ECO:0007669"/>
    <property type="project" value="UniProtKB-KW"/>
</dbReference>
<dbReference type="GO" id="GO:0015995">
    <property type="term" value="P:chlorophyll biosynthetic process"/>
    <property type="evidence" value="ECO:0007669"/>
    <property type="project" value="UniProtKB-KW"/>
</dbReference>
<dbReference type="GO" id="GO:0032259">
    <property type="term" value="P:methylation"/>
    <property type="evidence" value="ECO:0007669"/>
    <property type="project" value="UniProtKB-KW"/>
</dbReference>
<dbReference type="GO" id="GO:0015979">
    <property type="term" value="P:photosynthesis"/>
    <property type="evidence" value="ECO:0007669"/>
    <property type="project" value="UniProtKB-KW"/>
</dbReference>
<dbReference type="CDD" id="cd02440">
    <property type="entry name" value="AdoMet_MTases"/>
    <property type="match status" value="1"/>
</dbReference>
<dbReference type="Gene3D" id="1.10.287.1350">
    <property type="match status" value="1"/>
</dbReference>
<dbReference type="Gene3D" id="3.40.50.150">
    <property type="entry name" value="Vaccinia Virus protein VP39"/>
    <property type="match status" value="1"/>
</dbReference>
<dbReference type="Gene3D" id="1.10.10.10">
    <property type="entry name" value="Winged helix-like DNA-binding domain superfamily/Winged helix DNA-binding domain"/>
    <property type="match status" value="1"/>
</dbReference>
<dbReference type="InterPro" id="IPR016461">
    <property type="entry name" value="COMT-like"/>
</dbReference>
<dbReference type="InterPro" id="IPR001077">
    <property type="entry name" value="O_MeTrfase_dom"/>
</dbReference>
<dbReference type="InterPro" id="IPR012967">
    <property type="entry name" value="Plant_O-MeTrfase_dimerisation"/>
</dbReference>
<dbReference type="InterPro" id="IPR029063">
    <property type="entry name" value="SAM-dependent_MTases_sf"/>
</dbReference>
<dbReference type="InterPro" id="IPR036388">
    <property type="entry name" value="WH-like_DNA-bd_sf"/>
</dbReference>
<dbReference type="InterPro" id="IPR036390">
    <property type="entry name" value="WH_DNA-bd_sf"/>
</dbReference>
<dbReference type="PANTHER" id="PTHR43712:SF2">
    <property type="entry name" value="O-METHYLTRANSFERASE CICE"/>
    <property type="match status" value="1"/>
</dbReference>
<dbReference type="PANTHER" id="PTHR43712">
    <property type="entry name" value="PUTATIVE (AFU_ORTHOLOGUE AFUA_4G14580)-RELATED"/>
    <property type="match status" value="1"/>
</dbReference>
<dbReference type="Pfam" id="PF08100">
    <property type="entry name" value="Dimerisation"/>
    <property type="match status" value="1"/>
</dbReference>
<dbReference type="Pfam" id="PF00891">
    <property type="entry name" value="Methyltransf_2"/>
    <property type="match status" value="1"/>
</dbReference>
<dbReference type="PIRSF" id="PIRSF005739">
    <property type="entry name" value="O-mtase"/>
    <property type="match status" value="1"/>
</dbReference>
<dbReference type="SUPFAM" id="SSF53335">
    <property type="entry name" value="S-adenosyl-L-methionine-dependent methyltransferases"/>
    <property type="match status" value="1"/>
</dbReference>
<dbReference type="SUPFAM" id="SSF46785">
    <property type="entry name" value="Winged helix' DNA-binding domain"/>
    <property type="match status" value="1"/>
</dbReference>
<dbReference type="PROSITE" id="PS51683">
    <property type="entry name" value="SAM_OMT_II"/>
    <property type="match status" value="1"/>
</dbReference>
<name>CRTF_CERS4</name>
<accession>P54906</accession>
<accession>Q3J196</accession>
<accession>Q9RFC4</accession>
<gene>
    <name type="primary">crtF</name>
    <name type="ordered locus">RHOS4_18700</name>
    <name type="ORF">RSP_0264</name>
</gene>
<protein>
    <recommendedName>
        <fullName>Demethylspheroidene O-methyltransferase</fullName>
        <ecNumber>2.1.1.210</ecNumber>
    </recommendedName>
    <alternativeName>
        <fullName>Hydroxyneurosporene methyltransferase</fullName>
    </alternativeName>
</protein>
<evidence type="ECO:0000250" key="1"/>
<evidence type="ECO:0000255" key="2">
    <source>
        <dbReference type="PROSITE-ProRule" id="PRU01020"/>
    </source>
</evidence>
<evidence type="ECO:0000305" key="3"/>
<reference key="1">
    <citation type="journal article" date="1995" name="J. Bacteriol.">
        <title>Complete DNA sequence, specific Tn5 insertion map, and gene assignment of the carotenoid biosynthesis pathway of Rhodobacter sphaeroides.</title>
        <authorList>
            <person name="Lang H.P."/>
            <person name="Cogdell R.J."/>
            <person name="Takaichi S."/>
            <person name="Hunter C.N."/>
        </authorList>
    </citation>
    <scope>NUCLEOTIDE SEQUENCE [GENOMIC DNA]</scope>
</reference>
<reference key="2">
    <citation type="submission" date="1999-02" db="EMBL/GenBank/DDBJ databases">
        <authorList>
            <person name="Naylor G.W."/>
        </authorList>
    </citation>
    <scope>SEQUENCE REVISION TO 373</scope>
</reference>
<reference key="3">
    <citation type="journal article" date="2000" name="Nucleic Acids Res.">
        <title>DNA sequence analysis of the photosynthesis region of Rhodobacter sphaeroides 2.4.1.</title>
        <authorList>
            <person name="Choudhary M."/>
            <person name="Kaplan S."/>
        </authorList>
    </citation>
    <scope>NUCLEOTIDE SEQUENCE [GENOMIC DNA]</scope>
</reference>
<reference key="4">
    <citation type="submission" date="2005-09" db="EMBL/GenBank/DDBJ databases">
        <title>Complete sequence of chromosome 1 of Rhodobacter sphaeroides 2.4.1.</title>
        <authorList>
            <person name="Copeland A."/>
            <person name="Lucas S."/>
            <person name="Lapidus A."/>
            <person name="Barry K."/>
            <person name="Detter J.C."/>
            <person name="Glavina T."/>
            <person name="Hammon N."/>
            <person name="Israni S."/>
            <person name="Pitluck S."/>
            <person name="Richardson P."/>
            <person name="Mackenzie C."/>
            <person name="Choudhary M."/>
            <person name="Larimer F."/>
            <person name="Hauser L.J."/>
            <person name="Land M."/>
            <person name="Donohue T.J."/>
            <person name="Kaplan S."/>
        </authorList>
    </citation>
    <scope>NUCLEOTIDE SEQUENCE [LARGE SCALE GENOMIC DNA]</scope>
    <source>
        <strain>ATCC 17023 / DSM 158 / JCM 6121 / CCUG 31486 / LMG 2827 / NBRC 12203 / NCIMB 8253 / ATH 2.4.1.</strain>
    </source>
</reference>
<proteinExistence type="inferred from homology"/>
<keyword id="KW-0125">Carotenoid biosynthesis</keyword>
<keyword id="KW-0149">Chlorophyll biosynthesis</keyword>
<keyword id="KW-0489">Methyltransferase</keyword>
<keyword id="KW-0602">Photosynthesis</keyword>
<keyword id="KW-1185">Reference proteome</keyword>
<keyword id="KW-0949">S-adenosyl-L-methionine</keyword>
<keyword id="KW-0808">Transferase</keyword>
<comment type="function">
    <text evidence="1">Methyltransferase that mediates the O-methylation of 1-hydroxy carotenoids. Converts hydroxyneurosporene to methoxyneurosporene or demethylspheroidene to spheroidene. Also able to produce spirilloxanthin (By similarity).</text>
</comment>
<comment type="catalytic activity">
    <reaction>
        <text>demethylspheroidene + S-adenosyl-L-methionine = spheroidene + S-adenosyl-L-homocysteine + H(+)</text>
        <dbReference type="Rhea" id="RHEA:30903"/>
        <dbReference type="ChEBI" id="CHEBI:15378"/>
        <dbReference type="ChEBI" id="CHEBI:35330"/>
        <dbReference type="ChEBI" id="CHEBI:57856"/>
        <dbReference type="ChEBI" id="CHEBI:59789"/>
        <dbReference type="ChEBI" id="CHEBI:62505"/>
        <dbReference type="EC" id="2.1.1.210"/>
    </reaction>
</comment>
<comment type="pathway">
    <text>Carotenoid biosynthesis; spheroidene biosynthesis.</text>
</comment>
<comment type="similarity">
    <text evidence="2">Belongs to the class I-like SAM-binding methyltransferase superfamily. Cation-independent O-methyltransferase family.</text>
</comment>
<organism>
    <name type="scientific">Cereibacter sphaeroides (strain ATCC 17023 / DSM 158 / JCM 6121 / CCUG 31486 / LMG 2827 / NBRC 12203 / NCIMB 8253 / ATH 2.4.1.)</name>
    <name type="common">Rhodobacter sphaeroides</name>
    <dbReference type="NCBI Taxonomy" id="272943"/>
    <lineage>
        <taxon>Bacteria</taxon>
        <taxon>Pseudomonadati</taxon>
        <taxon>Pseudomonadota</taxon>
        <taxon>Alphaproteobacteria</taxon>
        <taxon>Rhodobacterales</taxon>
        <taxon>Paracoccaceae</taxon>
        <taxon>Cereibacter</taxon>
    </lineage>
</organism>
<feature type="chain" id="PRO_0000079368" description="Demethylspheroidene O-methyltransferase">
    <location>
        <begin position="1"/>
        <end position="379"/>
    </location>
</feature>
<feature type="binding site" evidence="2">
    <location>
        <position position="235"/>
    </location>
    <ligand>
        <name>S-adenosyl-L-methionine</name>
        <dbReference type="ChEBI" id="CHEBI:59789"/>
    </ligand>
</feature>
<feature type="binding site" evidence="2">
    <location>
        <position position="279"/>
    </location>
    <ligand>
        <name>S-adenosyl-L-methionine</name>
        <dbReference type="ChEBI" id="CHEBI:59789"/>
    </ligand>
</feature>
<feature type="sequence conflict" description="In Ref. 1; CAB38745." evidence="3" ref="1">
    <original>GVRLAG</original>
    <variation>APLP</variation>
    <location>
        <begin position="18"/>
        <end position="23"/>
    </location>
</feature>
<feature type="sequence conflict" description="In Ref. 1; CAB38745." evidence="3" ref="1">
    <original>R</original>
    <variation>G</variation>
    <location>
        <position position="38"/>
    </location>
</feature>
<feature type="sequence conflict" description="In Ref. 1; CAB38745." evidence="3" ref="1">
    <location>
        <position position="88"/>
    </location>
</feature>
<feature type="sequence conflict" description="In Ref. 1; CAB38745." evidence="3" ref="1">
    <original>Q</original>
    <variation>H</variation>
    <location>
        <position position="95"/>
    </location>
</feature>
<feature type="sequence conflict" description="In Ref. 3; AAF24295." evidence="3" ref="3">
    <original>L</original>
    <variation>F</variation>
    <location>
        <position position="96"/>
    </location>
</feature>
<feature type="sequence conflict" description="In Ref. 3; AAF24295." evidence="3" ref="3">
    <original>TR</original>
    <variation>KP</variation>
    <location>
        <begin position="108"/>
        <end position="109"/>
    </location>
</feature>
<feature type="sequence conflict" description="In Ref. 3; AAF24295." evidence="3" ref="3">
    <original>DG</original>
    <variation>QR</variation>
    <location>
        <begin position="112"/>
        <end position="113"/>
    </location>
</feature>
<feature type="sequence conflict" description="In Ref. 3; AAF24295." evidence="3" ref="3">
    <original>DLAVR</original>
    <variation>HLGGP</variation>
    <location>
        <begin position="116"/>
        <end position="120"/>
    </location>
</feature>
<feature type="sequence conflict" description="In Ref. 3; AAF24295." evidence="3" ref="3">
    <original>LE</original>
    <variation>VQ</variation>
    <location>
        <begin position="130"/>
        <end position="131"/>
    </location>
</feature>
<feature type="sequence conflict" description="In Ref. 3; AAF24295." evidence="3" ref="3">
    <original>V</original>
    <variation>W</variation>
    <location>
        <position position="134"/>
    </location>
</feature>
<feature type="sequence conflict" description="In Ref. 1; CAB38745." evidence="3" ref="1">
    <original>D</original>
    <variation>E</variation>
    <location>
        <position position="201"/>
    </location>
</feature>
<feature type="sequence conflict" description="In Ref. 1; CAB38745." evidence="3" ref="1">
    <original>FY</original>
    <variation>GD</variation>
    <location>
        <begin position="328"/>
        <end position="329"/>
    </location>
</feature>
<feature type="sequence conflict" description="In Ref. 1; CAB38745." evidence="3" ref="1">
    <original>EL</original>
    <variation>DV</variation>
    <location>
        <begin position="346"/>
        <end position="347"/>
    </location>
</feature>
<feature type="sequence conflict" description="In Ref. 1; CAB38745." evidence="3" ref="1">
    <original>F</original>
    <variation>G</variation>
    <location>
        <position position="359"/>
    </location>
</feature>